<reference key="1">
    <citation type="submission" date="2006-08" db="EMBL/GenBank/DDBJ databases">
        <authorList>
            <consortium name="NIH - Mammalian Gene Collection (MGC) project"/>
        </authorList>
    </citation>
    <scope>NUCLEOTIDE SEQUENCE [LARGE SCALE MRNA]</scope>
    <source>
        <strain>Hereford</strain>
        <tissue>Placenta</tissue>
    </source>
</reference>
<sequence>MNLVGSYAHHHHHHHHHHPHPAHPMLHEPFLFGPASRCHQERPYFQSWLLSPADAAPDFPAGGPPPAAAAAAASYGPDARPGQSPGRLEALGGRLGRRKGSGPKKERRRTESINSAFAELRECIPNVPADTKLSKIKTLRLATSYIAYLMDVLAKDAQAGDPEAFKAELKKADGGRESKRKRELQQHEGFPPALGPGEKRIKGRTGWPQQVWALELNQ</sequence>
<gene>
    <name type="primary">HAND1</name>
</gene>
<name>HAND1_BOVIN</name>
<proteinExistence type="evidence at transcript level"/>
<dbReference type="EMBL" id="BC120210">
    <property type="protein sequence ID" value="AAI20211.1"/>
    <property type="molecule type" value="mRNA"/>
</dbReference>
<dbReference type="RefSeq" id="NP_001069229.1">
    <property type="nucleotide sequence ID" value="NM_001075761.1"/>
</dbReference>
<dbReference type="SMR" id="Q0VCE2"/>
<dbReference type="FunCoup" id="Q0VCE2">
    <property type="interactions" value="85"/>
</dbReference>
<dbReference type="STRING" id="9913.ENSBTAP00000003015"/>
<dbReference type="PaxDb" id="9913-ENSBTAP00000003015"/>
<dbReference type="Ensembl" id="ENSBTAT00000003015.5">
    <property type="protein sequence ID" value="ENSBTAP00000003015.4"/>
    <property type="gene ID" value="ENSBTAG00000002335.5"/>
</dbReference>
<dbReference type="GeneID" id="517952"/>
<dbReference type="KEGG" id="bta:517952"/>
<dbReference type="CTD" id="9421"/>
<dbReference type="VEuPathDB" id="HostDB:ENSBTAG00000002335"/>
<dbReference type="VGNC" id="VGNC:29746">
    <property type="gene designation" value="HAND1"/>
</dbReference>
<dbReference type="eggNOG" id="KOG4029">
    <property type="taxonomic scope" value="Eukaryota"/>
</dbReference>
<dbReference type="GeneTree" id="ENSGT00940000161111"/>
<dbReference type="HOGENOM" id="CLU_119591_0_0_1"/>
<dbReference type="InParanoid" id="Q0VCE2"/>
<dbReference type="OMA" id="SRCHQDR"/>
<dbReference type="OrthoDB" id="10055449at2759"/>
<dbReference type="TreeFam" id="TF315153"/>
<dbReference type="Proteomes" id="UP000009136">
    <property type="component" value="Chromosome 7"/>
</dbReference>
<dbReference type="Bgee" id="ENSBTAG00000002335">
    <property type="expression patterns" value="Expressed in ascending colon and 31 other cell types or tissues"/>
</dbReference>
<dbReference type="GO" id="GO:0005737">
    <property type="term" value="C:cytoplasm"/>
    <property type="evidence" value="ECO:0007669"/>
    <property type="project" value="Ensembl"/>
</dbReference>
<dbReference type="GO" id="GO:0005730">
    <property type="term" value="C:nucleolus"/>
    <property type="evidence" value="ECO:0007669"/>
    <property type="project" value="UniProtKB-SubCell"/>
</dbReference>
<dbReference type="GO" id="GO:0005654">
    <property type="term" value="C:nucleoplasm"/>
    <property type="evidence" value="ECO:0007669"/>
    <property type="project" value="UniProtKB-SubCell"/>
</dbReference>
<dbReference type="GO" id="GO:0090575">
    <property type="term" value="C:RNA polymerase II transcription regulator complex"/>
    <property type="evidence" value="ECO:0007669"/>
    <property type="project" value="Ensembl"/>
</dbReference>
<dbReference type="GO" id="GO:0043425">
    <property type="term" value="F:bHLH transcription factor binding"/>
    <property type="evidence" value="ECO:0007669"/>
    <property type="project" value="Ensembl"/>
</dbReference>
<dbReference type="GO" id="GO:0001228">
    <property type="term" value="F:DNA-binding transcription activator activity, RNA polymerase II-specific"/>
    <property type="evidence" value="ECO:0007669"/>
    <property type="project" value="Ensembl"/>
</dbReference>
<dbReference type="GO" id="GO:0000981">
    <property type="term" value="F:DNA-binding transcription factor activity, RNA polymerase II-specific"/>
    <property type="evidence" value="ECO:0000318"/>
    <property type="project" value="GO_Central"/>
</dbReference>
<dbReference type="GO" id="GO:0001227">
    <property type="term" value="F:DNA-binding transcription repressor activity, RNA polymerase II-specific"/>
    <property type="evidence" value="ECO:0007669"/>
    <property type="project" value="Ensembl"/>
</dbReference>
<dbReference type="GO" id="GO:0019899">
    <property type="term" value="F:enzyme binding"/>
    <property type="evidence" value="ECO:0007669"/>
    <property type="project" value="Ensembl"/>
</dbReference>
<dbReference type="GO" id="GO:0042803">
    <property type="term" value="F:protein homodimerization activity"/>
    <property type="evidence" value="ECO:0007669"/>
    <property type="project" value="Ensembl"/>
</dbReference>
<dbReference type="GO" id="GO:0000978">
    <property type="term" value="F:RNA polymerase II cis-regulatory region sequence-specific DNA binding"/>
    <property type="evidence" value="ECO:0007669"/>
    <property type="project" value="Ensembl"/>
</dbReference>
<dbReference type="GO" id="GO:0000977">
    <property type="term" value="F:RNA polymerase II transcription regulatory region sequence-specific DNA binding"/>
    <property type="evidence" value="ECO:0000318"/>
    <property type="project" value="GO_Central"/>
</dbReference>
<dbReference type="GO" id="GO:0061629">
    <property type="term" value="F:RNA polymerase II-specific DNA-binding transcription factor binding"/>
    <property type="evidence" value="ECO:0007669"/>
    <property type="project" value="Ensembl"/>
</dbReference>
<dbReference type="GO" id="GO:0001221">
    <property type="term" value="F:transcription coregulator binding"/>
    <property type="evidence" value="ECO:0007669"/>
    <property type="project" value="Ensembl"/>
</dbReference>
<dbReference type="GO" id="GO:0001525">
    <property type="term" value="P:angiogenesis"/>
    <property type="evidence" value="ECO:0007669"/>
    <property type="project" value="Ensembl"/>
</dbReference>
<dbReference type="GO" id="GO:0003218">
    <property type="term" value="P:cardiac left ventricle formation"/>
    <property type="evidence" value="ECO:0007669"/>
    <property type="project" value="Ensembl"/>
</dbReference>
<dbReference type="GO" id="GO:0003219">
    <property type="term" value="P:cardiac right ventricle formation"/>
    <property type="evidence" value="ECO:0007669"/>
    <property type="project" value="Ensembl"/>
</dbReference>
<dbReference type="GO" id="GO:0060411">
    <property type="term" value="P:cardiac septum morphogenesis"/>
    <property type="evidence" value="ECO:0007669"/>
    <property type="project" value="Ensembl"/>
</dbReference>
<dbReference type="GO" id="GO:0060536">
    <property type="term" value="P:cartilage morphogenesis"/>
    <property type="evidence" value="ECO:0007669"/>
    <property type="project" value="Ensembl"/>
</dbReference>
<dbReference type="GO" id="GO:0003144">
    <property type="term" value="P:embryonic heart tube formation"/>
    <property type="evidence" value="ECO:0007669"/>
    <property type="project" value="Ensembl"/>
</dbReference>
<dbReference type="GO" id="GO:0007507">
    <property type="term" value="P:heart development"/>
    <property type="evidence" value="ECO:0000318"/>
    <property type="project" value="GO_Central"/>
</dbReference>
<dbReference type="GO" id="GO:0001947">
    <property type="term" value="P:heart looping"/>
    <property type="evidence" value="ECO:0007669"/>
    <property type="project" value="Ensembl"/>
</dbReference>
<dbReference type="GO" id="GO:0060485">
    <property type="term" value="P:mesenchyme development"/>
    <property type="evidence" value="ECO:0007669"/>
    <property type="project" value="Ensembl"/>
</dbReference>
<dbReference type="GO" id="GO:0001707">
    <property type="term" value="P:mesoderm formation"/>
    <property type="evidence" value="ECO:0007669"/>
    <property type="project" value="Ensembl"/>
</dbReference>
<dbReference type="GO" id="GO:0042475">
    <property type="term" value="P:odontogenesis of dentin-containing tooth"/>
    <property type="evidence" value="ECO:0007669"/>
    <property type="project" value="Ensembl"/>
</dbReference>
<dbReference type="GO" id="GO:0006357">
    <property type="term" value="P:regulation of transcription by RNA polymerase II"/>
    <property type="evidence" value="ECO:0000318"/>
    <property type="project" value="GO_Central"/>
</dbReference>
<dbReference type="GO" id="GO:0001829">
    <property type="term" value="P:trophectodermal cell differentiation"/>
    <property type="evidence" value="ECO:0007669"/>
    <property type="project" value="Ensembl"/>
</dbReference>
<dbReference type="GO" id="GO:0060707">
    <property type="term" value="P:trophoblast giant cell differentiation"/>
    <property type="evidence" value="ECO:0000250"/>
    <property type="project" value="UniProtKB"/>
</dbReference>
<dbReference type="GO" id="GO:0055010">
    <property type="term" value="P:ventricular cardiac muscle tissue morphogenesis"/>
    <property type="evidence" value="ECO:0007669"/>
    <property type="project" value="Ensembl"/>
</dbReference>
<dbReference type="CDD" id="cd18952">
    <property type="entry name" value="bHLH_TS_HAND1"/>
    <property type="match status" value="1"/>
</dbReference>
<dbReference type="FunFam" id="4.10.280.10:FF:000010">
    <property type="entry name" value="Scleraxis bHLH transcription factor"/>
    <property type="match status" value="1"/>
</dbReference>
<dbReference type="Gene3D" id="4.10.280.10">
    <property type="entry name" value="Helix-loop-helix DNA-binding domain"/>
    <property type="match status" value="1"/>
</dbReference>
<dbReference type="InterPro" id="IPR011598">
    <property type="entry name" value="bHLH_dom"/>
</dbReference>
<dbReference type="InterPro" id="IPR050283">
    <property type="entry name" value="E-box_TF_Regulators"/>
</dbReference>
<dbReference type="InterPro" id="IPR036638">
    <property type="entry name" value="HLH_DNA-bd_sf"/>
</dbReference>
<dbReference type="PANTHER" id="PTHR23349">
    <property type="entry name" value="BASIC HELIX-LOOP-HELIX TRANSCRIPTION FACTOR, TWIST"/>
    <property type="match status" value="1"/>
</dbReference>
<dbReference type="PANTHER" id="PTHR23349:SF3">
    <property type="entry name" value="HEART- AND NEURAL CREST DERIVATIVES-EXPRESSED PROTEIN 1"/>
    <property type="match status" value="1"/>
</dbReference>
<dbReference type="Pfam" id="PF00010">
    <property type="entry name" value="HLH"/>
    <property type="match status" value="1"/>
</dbReference>
<dbReference type="SMART" id="SM00353">
    <property type="entry name" value="HLH"/>
    <property type="match status" value="1"/>
</dbReference>
<dbReference type="SUPFAM" id="SSF47459">
    <property type="entry name" value="HLH, helix-loop-helix DNA-binding domain"/>
    <property type="match status" value="1"/>
</dbReference>
<dbReference type="PROSITE" id="PS50888">
    <property type="entry name" value="BHLH"/>
    <property type="match status" value="1"/>
</dbReference>
<feature type="chain" id="PRO_0000269173" description="Heart- and neural crest derivatives-expressed protein 1">
    <location>
        <begin position="1"/>
        <end position="218"/>
    </location>
</feature>
<feature type="domain" description="bHLH" evidence="4">
    <location>
        <begin position="97"/>
        <end position="149"/>
    </location>
</feature>
<feature type="region of interest" description="Disordered" evidence="5">
    <location>
        <begin position="1"/>
        <end position="23"/>
    </location>
</feature>
<feature type="region of interest" description="Disordered" evidence="5">
    <location>
        <begin position="56"/>
        <end position="112"/>
    </location>
</feature>
<feature type="region of interest" description="Disordered" evidence="5">
    <location>
        <begin position="172"/>
        <end position="203"/>
    </location>
</feature>
<feature type="compositionally biased region" description="Basic residues" evidence="5">
    <location>
        <begin position="8"/>
        <end position="21"/>
    </location>
</feature>
<feature type="compositionally biased region" description="Low complexity" evidence="5">
    <location>
        <begin position="68"/>
        <end position="92"/>
    </location>
</feature>
<feature type="compositionally biased region" description="Basic residues" evidence="5">
    <location>
        <begin position="95"/>
        <end position="107"/>
    </location>
</feature>
<feature type="modified residue" description="Phosphothreonine; by PLK4" evidence="3">
    <location>
        <position position="110"/>
    </location>
</feature>
<feature type="modified residue" description="Phosphoserine; by PLK4" evidence="3">
    <location>
        <position position="112"/>
    </location>
</feature>
<comment type="function">
    <text evidence="2 3">Transcription factor that plays an essential role in both trophoblast giant cell differentiation and in cardiac morphogenesis (By similarity). Binds the DNA sequence 5'-NRTCTG-3' (non-canonical E-box) (By similarity). Acts as a transcriptional repressor of SOX15 (By similarity). In the adult, could be required for ongoing expression of cardiac-specific genes (By similarity).</text>
</comment>
<comment type="subunit">
    <text evidence="1 3">Efficient DNA binding requires dimerization with another bHLH protein. Forms homodimers and heterodimers with TCF3 gene products E12 and E47, HAND2 and HEY1, HEY2 and HEYL (hairy-related transcription factors). Interacts with MDFIC (By similarity). Interacts with SOX15; the interaction enhances HAND1-induced differentiation of trophoblast giant cells (By similarity).</text>
</comment>
<comment type="subcellular location">
    <subcellularLocation>
        <location evidence="1">Nucleus</location>
        <location evidence="1">Nucleoplasm</location>
    </subcellularLocation>
    <subcellularLocation>
        <location evidence="1">Nucleus</location>
        <location evidence="1">Nucleolus</location>
    </subcellularLocation>
    <text evidence="1">Interaction with MDFIC sequesters it into the nucleolus, preventing the transcription factor activity. Phosphorylation by PLK4 disrupts the interaction with MDFIC and releases it from the nucleolus, leading to transcription factor activity (By similarity).</text>
</comment>
<comment type="PTM">
    <text evidence="1">Phosphorylation by PLK4 disrupts the interaction with MDFIC and leads to translocation into the nucleoplasm, allowing dimerization and transcription factor activity.</text>
</comment>
<protein>
    <recommendedName>
        <fullName>Heart- and neural crest derivatives-expressed protein 1</fullName>
    </recommendedName>
</protein>
<organism>
    <name type="scientific">Bos taurus</name>
    <name type="common">Bovine</name>
    <dbReference type="NCBI Taxonomy" id="9913"/>
    <lineage>
        <taxon>Eukaryota</taxon>
        <taxon>Metazoa</taxon>
        <taxon>Chordata</taxon>
        <taxon>Craniata</taxon>
        <taxon>Vertebrata</taxon>
        <taxon>Euteleostomi</taxon>
        <taxon>Mammalia</taxon>
        <taxon>Eutheria</taxon>
        <taxon>Laurasiatheria</taxon>
        <taxon>Artiodactyla</taxon>
        <taxon>Ruminantia</taxon>
        <taxon>Pecora</taxon>
        <taxon>Bovidae</taxon>
        <taxon>Bovinae</taxon>
        <taxon>Bos</taxon>
    </lineage>
</organism>
<keyword id="KW-0010">Activator</keyword>
<keyword id="KW-0217">Developmental protein</keyword>
<keyword id="KW-0238">DNA-binding</keyword>
<keyword id="KW-0539">Nucleus</keyword>
<keyword id="KW-0597">Phosphoprotein</keyword>
<keyword id="KW-1185">Reference proteome</keyword>
<keyword id="KW-0804">Transcription</keyword>
<keyword id="KW-0805">Transcription regulation</keyword>
<accession>Q0VCE2</accession>
<evidence type="ECO:0000250" key="1"/>
<evidence type="ECO:0000250" key="2">
    <source>
        <dbReference type="UniProtKB" id="O96004"/>
    </source>
</evidence>
<evidence type="ECO:0000250" key="3">
    <source>
        <dbReference type="UniProtKB" id="Q64279"/>
    </source>
</evidence>
<evidence type="ECO:0000255" key="4">
    <source>
        <dbReference type="PROSITE-ProRule" id="PRU00981"/>
    </source>
</evidence>
<evidence type="ECO:0000256" key="5">
    <source>
        <dbReference type="SAM" id="MobiDB-lite"/>
    </source>
</evidence>